<evidence type="ECO:0000255" key="1">
    <source>
        <dbReference type="HAMAP-Rule" id="MF_00201"/>
    </source>
</evidence>
<sequence>MQWREMGVVMGTRPYGDEHLLLSILTRNRGLRRGLTRLTKKRPLQIGDLIDATWRAKLPTNLGHFTCEVIASAFYSYFRDRIKLMCLSSITHIMSTALPENEPHPTLYDSFQDFAAAAEAEAPWYNHYLKLELLVLSQLGFALDLSKCAVSNSKDNLLFISPKTGRALSEAVGHAYRNKLLPLPKVLRSISCGVETECCSADEFALSLKILGFFLHRHLLQESHTFQESRKILTGLLG</sequence>
<reference key="1">
    <citation type="journal article" date="2009" name="BMC Genomics">
        <title>Conservation in the face of diversity: multistrain analysis of an intracellular bacterium.</title>
        <authorList>
            <person name="Dark M.J."/>
            <person name="Herndon D.R."/>
            <person name="Kappmeyer L.S."/>
            <person name="Gonzales M.P."/>
            <person name="Nordeen E."/>
            <person name="Palmer G.H."/>
            <person name="Knowles D.P. Jr."/>
            <person name="Brayton K.A."/>
        </authorList>
    </citation>
    <scope>NUCLEOTIDE SEQUENCE [LARGE SCALE GENOMIC DNA]</scope>
    <source>
        <strain>Florida</strain>
    </source>
</reference>
<comment type="function">
    <text evidence="1">Involved in DNA repair and RecF pathway recombination.</text>
</comment>
<comment type="similarity">
    <text evidence="1">Belongs to the RecO family.</text>
</comment>
<keyword id="KW-0227">DNA damage</keyword>
<keyword id="KW-0233">DNA recombination</keyword>
<keyword id="KW-0234">DNA repair</keyword>
<keyword id="KW-1185">Reference proteome</keyword>
<organism>
    <name type="scientific">Anaplasma marginale (strain Florida)</name>
    <dbReference type="NCBI Taxonomy" id="320483"/>
    <lineage>
        <taxon>Bacteria</taxon>
        <taxon>Pseudomonadati</taxon>
        <taxon>Pseudomonadota</taxon>
        <taxon>Alphaproteobacteria</taxon>
        <taxon>Rickettsiales</taxon>
        <taxon>Anaplasmataceae</taxon>
        <taxon>Anaplasma</taxon>
    </lineage>
</organism>
<protein>
    <recommendedName>
        <fullName evidence="1">DNA repair protein RecO</fullName>
    </recommendedName>
    <alternativeName>
        <fullName evidence="1">Recombination protein O</fullName>
    </alternativeName>
</protein>
<name>RECO_ANAMF</name>
<dbReference type="EMBL" id="CP001079">
    <property type="protein sequence ID" value="ACM49363.1"/>
    <property type="molecule type" value="Genomic_DNA"/>
</dbReference>
<dbReference type="RefSeq" id="WP_012658980.1">
    <property type="nucleotide sequence ID" value="NC_012026.1"/>
</dbReference>
<dbReference type="SMR" id="B9KIQ1"/>
<dbReference type="STRING" id="320483.AMF_511"/>
<dbReference type="GeneID" id="7398127"/>
<dbReference type="KEGG" id="amf:AMF_511"/>
<dbReference type="PATRIC" id="fig|320483.3.peg.592"/>
<dbReference type="eggNOG" id="COG1381">
    <property type="taxonomic scope" value="Bacteria"/>
</dbReference>
<dbReference type="HOGENOM" id="CLU_086029_0_0_5"/>
<dbReference type="Proteomes" id="UP000007307">
    <property type="component" value="Chromosome"/>
</dbReference>
<dbReference type="GO" id="GO:0043590">
    <property type="term" value="C:bacterial nucleoid"/>
    <property type="evidence" value="ECO:0007669"/>
    <property type="project" value="TreeGrafter"/>
</dbReference>
<dbReference type="GO" id="GO:0006310">
    <property type="term" value="P:DNA recombination"/>
    <property type="evidence" value="ECO:0007669"/>
    <property type="project" value="UniProtKB-UniRule"/>
</dbReference>
<dbReference type="GO" id="GO:0006302">
    <property type="term" value="P:double-strand break repair"/>
    <property type="evidence" value="ECO:0007669"/>
    <property type="project" value="TreeGrafter"/>
</dbReference>
<dbReference type="Gene3D" id="1.20.1440.120">
    <property type="entry name" value="Recombination protein O, C-terminal domain"/>
    <property type="match status" value="1"/>
</dbReference>
<dbReference type="HAMAP" id="MF_00201">
    <property type="entry name" value="RecO"/>
    <property type="match status" value="1"/>
</dbReference>
<dbReference type="InterPro" id="IPR037278">
    <property type="entry name" value="ARFGAP/RecO"/>
</dbReference>
<dbReference type="InterPro" id="IPR022572">
    <property type="entry name" value="DNA_rep/recomb_RecO_N"/>
</dbReference>
<dbReference type="InterPro" id="IPR003717">
    <property type="entry name" value="RecO"/>
</dbReference>
<dbReference type="InterPro" id="IPR042242">
    <property type="entry name" value="RecO_C"/>
</dbReference>
<dbReference type="NCBIfam" id="TIGR00613">
    <property type="entry name" value="reco"/>
    <property type="match status" value="1"/>
</dbReference>
<dbReference type="PANTHER" id="PTHR33991">
    <property type="entry name" value="DNA REPAIR PROTEIN RECO"/>
    <property type="match status" value="1"/>
</dbReference>
<dbReference type="PANTHER" id="PTHR33991:SF1">
    <property type="entry name" value="DNA REPAIR PROTEIN RECO"/>
    <property type="match status" value="1"/>
</dbReference>
<dbReference type="Pfam" id="PF02565">
    <property type="entry name" value="RecO_C"/>
    <property type="match status" value="1"/>
</dbReference>
<dbReference type="Pfam" id="PF11967">
    <property type="entry name" value="RecO_N"/>
    <property type="match status" value="1"/>
</dbReference>
<dbReference type="SUPFAM" id="SSF57863">
    <property type="entry name" value="ArfGap/RecO-like zinc finger"/>
    <property type="match status" value="1"/>
</dbReference>
<gene>
    <name evidence="1" type="primary">recO</name>
    <name type="ordered locus">AMF_511</name>
</gene>
<accession>B9KIQ1</accession>
<proteinExistence type="inferred from homology"/>
<feature type="chain" id="PRO_1000193351" description="DNA repair protein RecO">
    <location>
        <begin position="1"/>
        <end position="238"/>
    </location>
</feature>